<proteinExistence type="inferred from homology"/>
<dbReference type="EC" id="2.4.1.-"/>
<dbReference type="EMBL" id="AC002391">
    <property type="protein sequence ID" value="AAB87106.1"/>
    <property type="molecule type" value="Genomic_DNA"/>
</dbReference>
<dbReference type="EMBL" id="CP002685">
    <property type="protein sequence ID" value="AEC07434.1"/>
    <property type="molecule type" value="Genomic_DNA"/>
</dbReference>
<dbReference type="PIR" id="T00507">
    <property type="entry name" value="T00507"/>
</dbReference>
<dbReference type="RefSeq" id="NP_179906.1">
    <property type="nucleotide sequence ID" value="NM_127889.1"/>
</dbReference>
<dbReference type="SMR" id="O22183"/>
<dbReference type="FunCoup" id="O22183">
    <property type="interactions" value="114"/>
</dbReference>
<dbReference type="STRING" id="3702.O22183"/>
<dbReference type="CAZy" id="GT1">
    <property type="family name" value="Glycosyltransferase Family 1"/>
</dbReference>
<dbReference type="PaxDb" id="3702-AT2G23250.1"/>
<dbReference type="EnsemblPlants" id="AT2G23250.1">
    <property type="protein sequence ID" value="AT2G23250.1"/>
    <property type="gene ID" value="AT2G23250"/>
</dbReference>
<dbReference type="GeneID" id="816857"/>
<dbReference type="Gramene" id="AT2G23250.1">
    <property type="protein sequence ID" value="AT2G23250.1"/>
    <property type="gene ID" value="AT2G23250"/>
</dbReference>
<dbReference type="KEGG" id="ath:AT2G23250"/>
<dbReference type="Araport" id="AT2G23250"/>
<dbReference type="TAIR" id="AT2G23250">
    <property type="gene designation" value="UGT84B2"/>
</dbReference>
<dbReference type="eggNOG" id="KOG1192">
    <property type="taxonomic scope" value="Eukaryota"/>
</dbReference>
<dbReference type="HOGENOM" id="CLU_001724_0_1_1"/>
<dbReference type="InParanoid" id="O22183"/>
<dbReference type="OMA" id="SHMAISC"/>
<dbReference type="PhylomeDB" id="O22183"/>
<dbReference type="BioCyc" id="ARA:AT2G23250-MONOMER"/>
<dbReference type="BioCyc" id="MetaCyc:AT2G23250-MONOMER"/>
<dbReference type="PRO" id="PR:O22183"/>
<dbReference type="Proteomes" id="UP000006548">
    <property type="component" value="Chromosome 2"/>
</dbReference>
<dbReference type="ExpressionAtlas" id="O22183">
    <property type="expression patterns" value="differential"/>
</dbReference>
<dbReference type="GO" id="GO:0035251">
    <property type="term" value="F:UDP-glucosyltransferase activity"/>
    <property type="evidence" value="ECO:0007669"/>
    <property type="project" value="UniProtKB-ARBA"/>
</dbReference>
<dbReference type="CDD" id="cd03784">
    <property type="entry name" value="GT1_Gtf-like"/>
    <property type="match status" value="1"/>
</dbReference>
<dbReference type="FunFam" id="3.40.50.2000:FF:000078">
    <property type="entry name" value="Glycosyltransferase"/>
    <property type="match status" value="1"/>
</dbReference>
<dbReference type="Gene3D" id="3.40.50.2000">
    <property type="entry name" value="Glycogen Phosphorylase B"/>
    <property type="match status" value="2"/>
</dbReference>
<dbReference type="InterPro" id="IPR002213">
    <property type="entry name" value="UDP_glucos_trans"/>
</dbReference>
<dbReference type="InterPro" id="IPR035595">
    <property type="entry name" value="UDP_glycos_trans_CS"/>
</dbReference>
<dbReference type="PANTHER" id="PTHR11926">
    <property type="entry name" value="GLUCOSYL/GLUCURONOSYL TRANSFERASES"/>
    <property type="match status" value="1"/>
</dbReference>
<dbReference type="PANTHER" id="PTHR11926:SF1264">
    <property type="entry name" value="GLYCOSYLTRANSFERASE-RELATED"/>
    <property type="match status" value="1"/>
</dbReference>
<dbReference type="Pfam" id="PF00201">
    <property type="entry name" value="UDPGT"/>
    <property type="match status" value="1"/>
</dbReference>
<dbReference type="SUPFAM" id="SSF53756">
    <property type="entry name" value="UDP-Glycosyltransferase/glycogen phosphorylase"/>
    <property type="match status" value="1"/>
</dbReference>
<dbReference type="PROSITE" id="PS00375">
    <property type="entry name" value="UDPGT"/>
    <property type="match status" value="1"/>
</dbReference>
<organism>
    <name type="scientific">Arabidopsis thaliana</name>
    <name type="common">Mouse-ear cress</name>
    <dbReference type="NCBI Taxonomy" id="3702"/>
    <lineage>
        <taxon>Eukaryota</taxon>
        <taxon>Viridiplantae</taxon>
        <taxon>Streptophyta</taxon>
        <taxon>Embryophyta</taxon>
        <taxon>Tracheophyta</taxon>
        <taxon>Spermatophyta</taxon>
        <taxon>Magnoliopsida</taxon>
        <taxon>eudicotyledons</taxon>
        <taxon>Gunneridae</taxon>
        <taxon>Pentapetalae</taxon>
        <taxon>rosids</taxon>
        <taxon>malvids</taxon>
        <taxon>Brassicales</taxon>
        <taxon>Brassicaceae</taxon>
        <taxon>Camelineae</taxon>
        <taxon>Arabidopsis</taxon>
    </lineage>
</organism>
<reference key="1">
    <citation type="journal article" date="1999" name="Nature">
        <title>Sequence and analysis of chromosome 2 of the plant Arabidopsis thaliana.</title>
        <authorList>
            <person name="Lin X."/>
            <person name="Kaul S."/>
            <person name="Rounsley S.D."/>
            <person name="Shea T.P."/>
            <person name="Benito M.-I."/>
            <person name="Town C.D."/>
            <person name="Fujii C.Y."/>
            <person name="Mason T.M."/>
            <person name="Bowman C.L."/>
            <person name="Barnstead M.E."/>
            <person name="Feldblyum T.V."/>
            <person name="Buell C.R."/>
            <person name="Ketchum K.A."/>
            <person name="Lee J.J."/>
            <person name="Ronning C.M."/>
            <person name="Koo H.L."/>
            <person name="Moffat K.S."/>
            <person name="Cronin L.A."/>
            <person name="Shen M."/>
            <person name="Pai G."/>
            <person name="Van Aken S."/>
            <person name="Umayam L."/>
            <person name="Tallon L.J."/>
            <person name="Gill J.E."/>
            <person name="Adams M.D."/>
            <person name="Carrera A.J."/>
            <person name="Creasy T.H."/>
            <person name="Goodman H.M."/>
            <person name="Somerville C.R."/>
            <person name="Copenhaver G.P."/>
            <person name="Preuss D."/>
            <person name="Nierman W.C."/>
            <person name="White O."/>
            <person name="Eisen J.A."/>
            <person name="Salzberg S.L."/>
            <person name="Fraser C.M."/>
            <person name="Venter J.C."/>
        </authorList>
    </citation>
    <scope>NUCLEOTIDE SEQUENCE [LARGE SCALE GENOMIC DNA]</scope>
    <source>
        <strain>cv. Columbia</strain>
    </source>
</reference>
<reference key="2">
    <citation type="journal article" date="2017" name="Plant J.">
        <title>Araport11: a complete reannotation of the Arabidopsis thaliana reference genome.</title>
        <authorList>
            <person name="Cheng C.Y."/>
            <person name="Krishnakumar V."/>
            <person name="Chan A.P."/>
            <person name="Thibaud-Nissen F."/>
            <person name="Schobel S."/>
            <person name="Town C.D."/>
        </authorList>
    </citation>
    <scope>GENOME REANNOTATION</scope>
    <source>
        <strain>cv. Columbia</strain>
    </source>
</reference>
<reference key="3">
    <citation type="journal article" date="2001" name="J. Biol. Chem.">
        <title>Phylogenetic analysis of the UDP-glycosyltransferase multigene family of Arabidopsis thaliana.</title>
        <authorList>
            <person name="Li Y."/>
            <person name="Baldauf S."/>
            <person name="Lim E.K."/>
            <person name="Bowles D.J."/>
        </authorList>
    </citation>
    <scope>GENE FAMILY</scope>
</reference>
<sequence>MVALAFQGHLNPMLKFAKHLARTNLHFTLATTEQARDLLSSTADEPHRPVDLAFFSDGLPKDDPRDPDTLAKSLKKDGAKNLSKIIEEKRFDCIISVPFTPWVPAVAAAHNIPCAILWIQACGAFSVYYRYYMKTNPFPDLEDLNQTVELPALPLLEVRDLPSLMLPSQGANVNTLMAEFADCLKDVKWVLVNSFYELESEIIESMSDLKPIIPIGPLVSPFLLGNDEEKTLDMWKVDDYCMEWLDKQARSSVVYISFGSILKSLENQVETIATALKNRGVPFLWVIRPKEKGENVQVLQEMVKEGKGVVTEWGQQEKILSHMAISCFITHCGWNSTIETVVTGVPVVAYPTWIDQPLDARLLVDVFGIGVRMKNDAIDGELKVAEVERCIEAVTEGPAAADMRRRATELKHAARSAMSPGGSSAQNLDSFISDIPIT</sequence>
<accession>O22183</accession>
<comment type="similarity">
    <text evidence="2">Belongs to the UDP-glycosyltransferase family.</text>
</comment>
<evidence type="ECO:0000250" key="1"/>
<evidence type="ECO:0000305" key="2"/>
<gene>
    <name type="primary">UGT84B2</name>
    <name type="ordered locus">At2g23250</name>
    <name type="ORF">T20D16.12</name>
</gene>
<keyword id="KW-0328">Glycosyltransferase</keyword>
<keyword id="KW-1185">Reference proteome</keyword>
<keyword id="KW-0808">Transferase</keyword>
<feature type="chain" id="PRO_0000409125" description="UDP-glycosyltransferase 84B2">
    <location>
        <begin position="1"/>
        <end position="438"/>
    </location>
</feature>
<feature type="binding site" evidence="1">
    <location>
        <position position="260"/>
    </location>
    <ligand>
        <name>UDP-alpha-D-glucose</name>
        <dbReference type="ChEBI" id="CHEBI:58885"/>
    </ligand>
</feature>
<feature type="binding site" evidence="1">
    <location>
        <begin position="314"/>
        <end position="316"/>
    </location>
    <ligand>
        <name>UDP-alpha-D-glucose</name>
        <dbReference type="ChEBI" id="CHEBI:58885"/>
    </ligand>
</feature>
<feature type="binding site" evidence="1">
    <location>
        <begin position="331"/>
        <end position="339"/>
    </location>
    <ligand>
        <name>UDP-alpha-D-glucose</name>
        <dbReference type="ChEBI" id="CHEBI:58885"/>
    </ligand>
</feature>
<feature type="binding site" evidence="1">
    <location>
        <begin position="353"/>
        <end position="356"/>
    </location>
    <ligand>
        <name>UDP-alpha-D-glucose</name>
        <dbReference type="ChEBI" id="CHEBI:58885"/>
    </ligand>
</feature>
<protein>
    <recommendedName>
        <fullName>UDP-glycosyltransferase 84B2</fullName>
        <ecNumber>2.4.1.-</ecNumber>
    </recommendedName>
</protein>
<name>U84B2_ARATH</name>